<keyword id="KW-0012">Acyltransferase</keyword>
<keyword id="KW-0963">Cytoplasm</keyword>
<keyword id="KW-0275">Fatty acid biosynthesis</keyword>
<keyword id="KW-0276">Fatty acid metabolism</keyword>
<keyword id="KW-0444">Lipid biosynthesis</keyword>
<keyword id="KW-0443">Lipid metabolism</keyword>
<keyword id="KW-0511">Multifunctional enzyme</keyword>
<keyword id="KW-0808">Transferase</keyword>
<reference key="1">
    <citation type="journal article" date="2008" name="Antimicrob. Agents Chemother.">
        <title>Mutated response regulator graR is responsible for phenotypic conversion of Staphylococcus aureus from heterogeneous vancomycin-intermediate resistance to vancomycin-intermediate resistance.</title>
        <authorList>
            <person name="Neoh H.-M."/>
            <person name="Cui L."/>
            <person name="Yuzawa H."/>
            <person name="Takeuchi F."/>
            <person name="Matsuo M."/>
            <person name="Hiramatsu K."/>
        </authorList>
    </citation>
    <scope>NUCLEOTIDE SEQUENCE [LARGE SCALE GENOMIC DNA]</scope>
    <source>
        <strain>Mu3 / ATCC 700698</strain>
    </source>
</reference>
<dbReference type="EC" id="2.3.1.180" evidence="1"/>
<dbReference type="EMBL" id="AP009324">
    <property type="protein sequence ID" value="BAF77861.1"/>
    <property type="molecule type" value="Genomic_DNA"/>
</dbReference>
<dbReference type="RefSeq" id="WP_001100526.1">
    <property type="nucleotide sequence ID" value="NC_009782.1"/>
</dbReference>
<dbReference type="SMR" id="A7X0K2"/>
<dbReference type="KEGG" id="saw:SAHV_0978"/>
<dbReference type="HOGENOM" id="CLU_039592_3_1_9"/>
<dbReference type="UniPathway" id="UPA00094"/>
<dbReference type="GO" id="GO:0005737">
    <property type="term" value="C:cytoplasm"/>
    <property type="evidence" value="ECO:0007669"/>
    <property type="project" value="UniProtKB-SubCell"/>
</dbReference>
<dbReference type="GO" id="GO:0004315">
    <property type="term" value="F:3-oxoacyl-[acyl-carrier-protein] synthase activity"/>
    <property type="evidence" value="ECO:0007669"/>
    <property type="project" value="InterPro"/>
</dbReference>
<dbReference type="GO" id="GO:0033818">
    <property type="term" value="F:beta-ketoacyl-acyl-carrier-protein synthase III activity"/>
    <property type="evidence" value="ECO:0007669"/>
    <property type="project" value="UniProtKB-UniRule"/>
</dbReference>
<dbReference type="GO" id="GO:0006633">
    <property type="term" value="P:fatty acid biosynthetic process"/>
    <property type="evidence" value="ECO:0007669"/>
    <property type="project" value="UniProtKB-UniRule"/>
</dbReference>
<dbReference type="CDD" id="cd00830">
    <property type="entry name" value="KAS_III"/>
    <property type="match status" value="1"/>
</dbReference>
<dbReference type="FunFam" id="3.40.47.10:FF:000004">
    <property type="entry name" value="3-oxoacyl-[acyl-carrier-protein] synthase 3"/>
    <property type="match status" value="1"/>
</dbReference>
<dbReference type="Gene3D" id="3.40.47.10">
    <property type="match status" value="2"/>
</dbReference>
<dbReference type="HAMAP" id="MF_01815">
    <property type="entry name" value="FabH"/>
    <property type="match status" value="1"/>
</dbReference>
<dbReference type="InterPro" id="IPR013747">
    <property type="entry name" value="ACP_syn_III_C"/>
</dbReference>
<dbReference type="InterPro" id="IPR013751">
    <property type="entry name" value="ACP_syn_III_N"/>
</dbReference>
<dbReference type="InterPro" id="IPR004655">
    <property type="entry name" value="FabH"/>
</dbReference>
<dbReference type="InterPro" id="IPR016039">
    <property type="entry name" value="Thiolase-like"/>
</dbReference>
<dbReference type="NCBIfam" id="TIGR00747">
    <property type="entry name" value="fabH"/>
    <property type="match status" value="1"/>
</dbReference>
<dbReference type="NCBIfam" id="NF006829">
    <property type="entry name" value="PRK09352.1"/>
    <property type="match status" value="1"/>
</dbReference>
<dbReference type="PANTHER" id="PTHR43091">
    <property type="entry name" value="3-OXOACYL-[ACYL-CARRIER-PROTEIN] SYNTHASE"/>
    <property type="match status" value="1"/>
</dbReference>
<dbReference type="PANTHER" id="PTHR43091:SF1">
    <property type="entry name" value="BETA-KETOACYL-[ACYL-CARRIER-PROTEIN] SYNTHASE III, CHLOROPLASTIC"/>
    <property type="match status" value="1"/>
</dbReference>
<dbReference type="Pfam" id="PF08545">
    <property type="entry name" value="ACP_syn_III"/>
    <property type="match status" value="1"/>
</dbReference>
<dbReference type="Pfam" id="PF08541">
    <property type="entry name" value="ACP_syn_III_C"/>
    <property type="match status" value="1"/>
</dbReference>
<dbReference type="SUPFAM" id="SSF53901">
    <property type="entry name" value="Thiolase-like"/>
    <property type="match status" value="1"/>
</dbReference>
<organism>
    <name type="scientific">Staphylococcus aureus (strain Mu3 / ATCC 700698)</name>
    <dbReference type="NCBI Taxonomy" id="418127"/>
    <lineage>
        <taxon>Bacteria</taxon>
        <taxon>Bacillati</taxon>
        <taxon>Bacillota</taxon>
        <taxon>Bacilli</taxon>
        <taxon>Bacillales</taxon>
        <taxon>Staphylococcaceae</taxon>
        <taxon>Staphylococcus</taxon>
    </lineage>
</organism>
<sequence>MNVGIKGFGAYAPEKIIDNAYFEQFLDTSDEWISKMTGIKERHWADDDQDTSDLAYEASVKAIADAGIQPEDIDMIIVATATGDMPFPTVANMLQERLGTGKVASMDQLAACSGFMYSMITAKQYVQSGDYHNILVVGADKLSKITDLTDRSTAVLFGDGAGAVIIGEVSEGRGIISYEMGSDGTGGKHLYLDKDTGKLKMNGREVFKFAVRIMGDASTRVVEKANLTSDDIDLFIPHQANIRIMESARERLGISKDKMSVSVNKYGNTSAASIPLSIDQELKNGKLKDDDTIVLVGFGGGLTWGAMTIKWGK</sequence>
<accession>A7X0K2</accession>
<evidence type="ECO:0000255" key="1">
    <source>
        <dbReference type="HAMAP-Rule" id="MF_01815"/>
    </source>
</evidence>
<comment type="function">
    <text evidence="1">Catalyzes the condensation reaction of fatty acid synthesis by the addition to an acyl acceptor of two carbons from malonyl-ACP. Catalyzes the first condensation reaction which initiates fatty acid synthesis and may therefore play a role in governing the total rate of fatty acid production. Possesses both acetoacetyl-ACP synthase and acetyl transacylase activities. Its substrate specificity determines the biosynthesis of branched-chain and/or straight-chain of fatty acids.</text>
</comment>
<comment type="catalytic activity">
    <reaction evidence="1">
        <text>malonyl-[ACP] + acetyl-CoA + H(+) = 3-oxobutanoyl-[ACP] + CO2 + CoA</text>
        <dbReference type="Rhea" id="RHEA:12080"/>
        <dbReference type="Rhea" id="RHEA-COMP:9623"/>
        <dbReference type="Rhea" id="RHEA-COMP:9625"/>
        <dbReference type="ChEBI" id="CHEBI:15378"/>
        <dbReference type="ChEBI" id="CHEBI:16526"/>
        <dbReference type="ChEBI" id="CHEBI:57287"/>
        <dbReference type="ChEBI" id="CHEBI:57288"/>
        <dbReference type="ChEBI" id="CHEBI:78449"/>
        <dbReference type="ChEBI" id="CHEBI:78450"/>
        <dbReference type="EC" id="2.3.1.180"/>
    </reaction>
</comment>
<comment type="pathway">
    <text evidence="1">Lipid metabolism; fatty acid biosynthesis.</text>
</comment>
<comment type="subunit">
    <text evidence="1">Homodimer.</text>
</comment>
<comment type="subcellular location">
    <subcellularLocation>
        <location evidence="1">Cytoplasm</location>
    </subcellularLocation>
</comment>
<comment type="domain">
    <text evidence="1">The last Arg residue of the ACP-binding site is essential for the weak association between ACP/AcpP and FabH.</text>
</comment>
<comment type="similarity">
    <text evidence="1">Belongs to the thiolase-like superfamily. FabH family.</text>
</comment>
<feature type="chain" id="PRO_1000056414" description="Beta-ketoacyl-[acyl-carrier-protein] synthase III">
    <location>
        <begin position="1"/>
        <end position="313"/>
    </location>
</feature>
<feature type="region of interest" description="ACP-binding" evidence="1">
    <location>
        <begin position="239"/>
        <end position="243"/>
    </location>
</feature>
<feature type="active site" evidence="1">
    <location>
        <position position="112"/>
    </location>
</feature>
<feature type="active site" evidence="1">
    <location>
        <position position="238"/>
    </location>
</feature>
<feature type="active site" evidence="1">
    <location>
        <position position="268"/>
    </location>
</feature>
<protein>
    <recommendedName>
        <fullName evidence="1">Beta-ketoacyl-[acyl-carrier-protein] synthase III</fullName>
        <shortName evidence="1">Beta-ketoacyl-ACP synthase III</shortName>
        <shortName evidence="1">KAS III</shortName>
        <ecNumber evidence="1">2.3.1.180</ecNumber>
    </recommendedName>
    <alternativeName>
        <fullName evidence="1">3-oxoacyl-[acyl-carrier-protein] synthase 3</fullName>
    </alternativeName>
    <alternativeName>
        <fullName evidence="1">3-oxoacyl-[acyl-carrier-protein] synthase III</fullName>
    </alternativeName>
</protein>
<name>FABH_STAA1</name>
<gene>
    <name evidence="1" type="primary">fabH</name>
    <name type="ordered locus">SAHV_0978</name>
</gene>
<proteinExistence type="inferred from homology"/>